<organism>
    <name type="scientific">Caenorhabditis elegans</name>
    <dbReference type="NCBI Taxonomy" id="6239"/>
    <lineage>
        <taxon>Eukaryota</taxon>
        <taxon>Metazoa</taxon>
        <taxon>Ecdysozoa</taxon>
        <taxon>Nematoda</taxon>
        <taxon>Chromadorea</taxon>
        <taxon>Rhabditida</taxon>
        <taxon>Rhabditina</taxon>
        <taxon>Rhabditomorpha</taxon>
        <taxon>Rhabditoidea</taxon>
        <taxon>Rhabditidae</taxon>
        <taxon>Peloderinae</taxon>
        <taxon>Caenorhabditis</taxon>
    </lineage>
</organism>
<feature type="chain" id="PRO_0000052370" description="Probable Na(+)/H(+) antiporter nhx-3">
    <location>
        <begin position="1"/>
        <end position="670"/>
    </location>
</feature>
<feature type="transmembrane region" description="Helical" evidence="1">
    <location>
        <begin position="41"/>
        <end position="61"/>
    </location>
</feature>
<feature type="transmembrane region" description="Helical" evidence="1">
    <location>
        <begin position="73"/>
        <end position="93"/>
    </location>
</feature>
<feature type="transmembrane region" description="Helical" evidence="1">
    <location>
        <begin position="97"/>
        <end position="117"/>
    </location>
</feature>
<feature type="transmembrane region" description="Helical" evidence="1">
    <location>
        <begin position="129"/>
        <end position="149"/>
    </location>
</feature>
<feature type="transmembrane region" description="Helical" evidence="1">
    <location>
        <begin position="164"/>
        <end position="184"/>
    </location>
</feature>
<feature type="transmembrane region" description="Helical" evidence="1">
    <location>
        <begin position="192"/>
        <end position="212"/>
    </location>
</feature>
<feature type="transmembrane region" description="Helical" evidence="1">
    <location>
        <begin position="235"/>
        <end position="255"/>
    </location>
</feature>
<feature type="transmembrane region" description="Helical" evidence="1">
    <location>
        <begin position="268"/>
        <end position="288"/>
    </location>
</feature>
<feature type="transmembrane region" description="Helical" evidence="1">
    <location>
        <begin position="325"/>
        <end position="345"/>
    </location>
</feature>
<feature type="transmembrane region" description="Helical" evidence="1">
    <location>
        <begin position="351"/>
        <end position="371"/>
    </location>
</feature>
<feature type="transmembrane region" description="Helical" evidence="1">
    <location>
        <begin position="390"/>
        <end position="410"/>
    </location>
</feature>
<feature type="transmembrane region" description="Helical" evidence="1">
    <location>
        <begin position="418"/>
        <end position="438"/>
    </location>
</feature>
<feature type="region of interest" description="Disordered" evidence="2">
    <location>
        <begin position="648"/>
        <end position="670"/>
    </location>
</feature>
<feature type="glycosylation site" description="N-linked (GlcNAc...) asparagine" evidence="1">
    <location>
        <position position="310"/>
    </location>
</feature>
<feature type="splice variant" id="VSP_015557" description="In isoform b." evidence="4">
    <original>MLSKLFVFLLICYATADEVDKKEAKHGFQ</original>
    <variation>MEVRDYGLAE</variation>
    <location>
        <begin position="1"/>
        <end position="29"/>
    </location>
</feature>
<sequence length="670" mass="75546">MLSKLFVFLLICYATADEVDKKEAKHGFQLFHWNWDHIHKVYVITTWLLVASLAKILFNLMKPLSKWLPDSSLLIIVGLGLGYFLNQTTLSGVHLDSHAFFLYLLPPIIFDAGYFMPNRALFKNFDSVLVFSVLGTLWNTFAIGGSLLIMSKYQLFTMPFTTFEILVFSALISAVDPVAVIAIFEEIHVNEFLFINVFGEALFNDGVTVVLYQMFKSFALIGSENLSPWDYATGGLSFFVVALGGAAIGIIFAIATSLATKYTQGIKILAPVFIFLLPYMAYLTAEMVSLSSIIAIAVCGMLMKQYIKGNITEAATNSVKYFTKMLAQCSETVIFMFLGLSTLTSEHHVDFIFIGATLVFCLIYRAIGIIVQCFILNKFRAKKFEVVDQFILSYGGLRGAIAYGLVVSIPASIQAKPMFITTTICVIYFTVFLQGITIRPLVNCLNVKKKEHREATMVESVYNKYLDYMMSGVEDIAGQRGHYSFIENFERFNAKVIKPVLMRHEKRQSFDATSIIRAYEKITLEDAIKLTKVKSTLQNKRLEKVKSEVRVAPEQTTVTPKDVQLARFMQSGENIDQLYTLFSDLLDKKLNELKVQADKVDKANDDDIQDDYMAEMGSHSNLGFMHHSADQLDSDSVFQRRGRRLSTGDLKGHCGTSRKPKHSMFELRHV</sequence>
<evidence type="ECO:0000255" key="1"/>
<evidence type="ECO:0000256" key="2">
    <source>
        <dbReference type="SAM" id="MobiDB-lite"/>
    </source>
</evidence>
<evidence type="ECO:0000269" key="3">
    <source>
    </source>
</evidence>
<evidence type="ECO:0000305" key="4"/>
<gene>
    <name type="primary">nhx-3</name>
    <name type="ORF">C54F6.13</name>
</gene>
<reference key="1">
    <citation type="journal article" date="2002" name="J. Biol. Chem.">
        <title>The NHX family of Na+-H+ exchangers in Caenorhabditis elegans.</title>
        <authorList>
            <person name="Nehrke K."/>
            <person name="Melvin J.E."/>
        </authorList>
    </citation>
    <scope>NUCLEOTIDE SEQUENCE [MRNA] (ISOFORM A)</scope>
    <scope>FUNCTION</scope>
    <scope>SUBCELLULAR LOCATION</scope>
    <scope>TISSUE SPECIFICITY</scope>
</reference>
<reference key="2">
    <citation type="journal article" date="1998" name="Science">
        <title>Genome sequence of the nematode C. elegans: a platform for investigating biology.</title>
        <authorList>
            <consortium name="The C. elegans sequencing consortium"/>
        </authorList>
    </citation>
    <scope>NUCLEOTIDE SEQUENCE [LARGE SCALE GENOMIC DNA]</scope>
    <scope>ALTERNATIVE SPLICING</scope>
    <source>
        <strain>Bristol N2</strain>
    </source>
</reference>
<name>NHX3_CAEEL</name>
<keyword id="KW-0025">Alternative splicing</keyword>
<keyword id="KW-0050">Antiport</keyword>
<keyword id="KW-0325">Glycoprotein</keyword>
<keyword id="KW-0406">Ion transport</keyword>
<keyword id="KW-0472">Membrane</keyword>
<keyword id="KW-0597">Phosphoprotein</keyword>
<keyword id="KW-1185">Reference proteome</keyword>
<keyword id="KW-0915">Sodium</keyword>
<keyword id="KW-0739">Sodium transport</keyword>
<keyword id="KW-0812">Transmembrane</keyword>
<keyword id="KW-1133">Transmembrane helix</keyword>
<keyword id="KW-0813">Transport</keyword>
<comment type="function">
    <text evidence="3">Plays a role in epithelial membrane transport processes.</text>
</comment>
<comment type="subcellular location">
    <subcellularLocation>
        <location evidence="3">Endomembrane system</location>
        <topology evidence="3">Multi-pass membrane protein</topology>
    </subcellularLocation>
    <text>Intracellular organelles.</text>
</comment>
<comment type="alternative products">
    <event type="alternative splicing"/>
    <isoform>
        <id>O16452-1</id>
        <name>a</name>
        <sequence type="displayed"/>
    </isoform>
    <isoform>
        <id>O16452-2</id>
        <name>b</name>
        <sequence type="described" ref="VSP_015557"/>
    </isoform>
</comment>
<comment type="tissue specificity">
    <text evidence="3">Expressed in hypodermal cells of the main body syncytium, ut1 cells of the vulva and the spermathecal junction cell.</text>
</comment>
<comment type="PTM">
    <text evidence="4">Phosphorylated.</text>
</comment>
<comment type="similarity">
    <text evidence="4">Belongs to the monovalent cation:proton antiporter 1 (CPA1) transporter (TC 2.A.36) family.</text>
</comment>
<protein>
    <recommendedName>
        <fullName>Probable Na(+)/H(+) antiporter nhx-3</fullName>
    </recommendedName>
    <alternativeName>
        <fullName>Na(+)-H(+) exchanger protein 3</fullName>
    </alternativeName>
</protein>
<accession>O16452</accession>
<accession>Q71VC7</accession>
<accession>Q8T5S0</accession>
<dbReference type="EMBL" id="AF497825">
    <property type="protein sequence ID" value="AAM18103.1"/>
    <property type="molecule type" value="mRNA"/>
</dbReference>
<dbReference type="EMBL" id="FO080340">
    <property type="protein sequence ID" value="CCD62992.1"/>
    <property type="molecule type" value="Genomic_DNA"/>
</dbReference>
<dbReference type="EMBL" id="FO080340">
    <property type="protein sequence ID" value="CCD62993.1"/>
    <property type="molecule type" value="Genomic_DNA"/>
</dbReference>
<dbReference type="PIR" id="T31869">
    <property type="entry name" value="T31869"/>
</dbReference>
<dbReference type="RefSeq" id="NP_001023735.1">
    <molecule id="O16452-1"/>
    <property type="nucleotide sequence ID" value="NM_001028564.6"/>
</dbReference>
<dbReference type="RefSeq" id="NP_001023736.1">
    <molecule id="O16452-2"/>
    <property type="nucleotide sequence ID" value="NM_001028565.4"/>
</dbReference>
<dbReference type="SMR" id="O16452"/>
<dbReference type="FunCoup" id="O16452">
    <property type="interactions" value="340"/>
</dbReference>
<dbReference type="STRING" id="6239.C54F6.13a.1"/>
<dbReference type="GlyCosmos" id="O16452">
    <property type="glycosylation" value="1 site, No reported glycans"/>
</dbReference>
<dbReference type="iPTMnet" id="O16452"/>
<dbReference type="PaxDb" id="6239-C54F6.13a"/>
<dbReference type="PeptideAtlas" id="O16452"/>
<dbReference type="EnsemblMetazoa" id="C54F6.13a.1">
    <molecule id="O16452-1"/>
    <property type="protein sequence ID" value="C54F6.13a.1"/>
    <property type="gene ID" value="WBGene00003731"/>
</dbReference>
<dbReference type="EnsemblMetazoa" id="C54F6.13a.2">
    <molecule id="O16452-1"/>
    <property type="protein sequence ID" value="C54F6.13a.2"/>
    <property type="gene ID" value="WBGene00003731"/>
</dbReference>
<dbReference type="EnsemblMetazoa" id="C54F6.13b.1">
    <molecule id="O16452-2"/>
    <property type="protein sequence ID" value="C54F6.13b.1"/>
    <property type="gene ID" value="WBGene00003731"/>
</dbReference>
<dbReference type="GeneID" id="183811"/>
<dbReference type="KEGG" id="cel:CELE_C54F6.13"/>
<dbReference type="UCSC" id="C54F6.13a">
    <molecule id="O16452-1"/>
    <property type="organism name" value="c. elegans"/>
</dbReference>
<dbReference type="AGR" id="WB:WBGene00003731"/>
<dbReference type="CTD" id="183811"/>
<dbReference type="WormBase" id="C54F6.13a">
    <molecule id="O16452-1"/>
    <property type="protein sequence ID" value="CE32044"/>
    <property type="gene ID" value="WBGene00003731"/>
    <property type="gene designation" value="nhx-3"/>
</dbReference>
<dbReference type="WormBase" id="C54F6.13b">
    <molecule id="O16452-2"/>
    <property type="protein sequence ID" value="CE08985"/>
    <property type="gene ID" value="WBGene00003731"/>
    <property type="gene designation" value="nhx-3"/>
</dbReference>
<dbReference type="eggNOG" id="KOG1966">
    <property type="taxonomic scope" value="Eukaryota"/>
</dbReference>
<dbReference type="InParanoid" id="O16452"/>
<dbReference type="OMA" id="FLLICYA"/>
<dbReference type="OrthoDB" id="196264at2759"/>
<dbReference type="PhylomeDB" id="O16452"/>
<dbReference type="Reactome" id="R-CEL-425986">
    <property type="pathway name" value="Sodium/Proton exchangers"/>
</dbReference>
<dbReference type="PRO" id="PR:O16452"/>
<dbReference type="Proteomes" id="UP000001940">
    <property type="component" value="Chromosome V"/>
</dbReference>
<dbReference type="Bgee" id="WBGene00003731">
    <property type="expression patterns" value="Expressed in material anatomical entity and 3 other cell types or tissues"/>
</dbReference>
<dbReference type="GO" id="GO:0012505">
    <property type="term" value="C:endomembrane system"/>
    <property type="evidence" value="ECO:0007669"/>
    <property type="project" value="UniProtKB-SubCell"/>
</dbReference>
<dbReference type="GO" id="GO:0005886">
    <property type="term" value="C:plasma membrane"/>
    <property type="evidence" value="ECO:0000318"/>
    <property type="project" value="GO_Central"/>
</dbReference>
<dbReference type="GO" id="GO:0015386">
    <property type="term" value="F:potassium:proton antiporter activity"/>
    <property type="evidence" value="ECO:0000318"/>
    <property type="project" value="GO_Central"/>
</dbReference>
<dbReference type="GO" id="GO:0015385">
    <property type="term" value="F:sodium:proton antiporter activity"/>
    <property type="evidence" value="ECO:0000318"/>
    <property type="project" value="GO_Central"/>
</dbReference>
<dbReference type="GO" id="GO:0071805">
    <property type="term" value="P:potassium ion transmembrane transport"/>
    <property type="evidence" value="ECO:0000318"/>
    <property type="project" value="GO_Central"/>
</dbReference>
<dbReference type="GO" id="GO:0051453">
    <property type="term" value="P:regulation of intracellular pH"/>
    <property type="evidence" value="ECO:0000318"/>
    <property type="project" value="GO_Central"/>
</dbReference>
<dbReference type="GO" id="GO:0098719">
    <property type="term" value="P:sodium ion import across plasma membrane"/>
    <property type="evidence" value="ECO:0000318"/>
    <property type="project" value="GO_Central"/>
</dbReference>
<dbReference type="Gene3D" id="6.10.140.1330">
    <property type="match status" value="1"/>
</dbReference>
<dbReference type="InterPro" id="IPR018422">
    <property type="entry name" value="Cation/H_exchanger_CPA1"/>
</dbReference>
<dbReference type="InterPro" id="IPR006153">
    <property type="entry name" value="Cation/H_exchanger_TM"/>
</dbReference>
<dbReference type="InterPro" id="IPR004709">
    <property type="entry name" value="NaH_exchanger"/>
</dbReference>
<dbReference type="NCBIfam" id="TIGR00840">
    <property type="entry name" value="b_cpa1"/>
    <property type="match status" value="1"/>
</dbReference>
<dbReference type="PANTHER" id="PTHR10110:SF194">
    <property type="entry name" value="NA(+)_H(+) ANTIPORTER NHX-3-RELATED"/>
    <property type="match status" value="1"/>
</dbReference>
<dbReference type="PANTHER" id="PTHR10110">
    <property type="entry name" value="SODIUM/HYDROGEN EXCHANGER"/>
    <property type="match status" value="1"/>
</dbReference>
<dbReference type="Pfam" id="PF00999">
    <property type="entry name" value="Na_H_Exchanger"/>
    <property type="match status" value="1"/>
</dbReference>
<dbReference type="PRINTS" id="PR01084">
    <property type="entry name" value="NAHEXCHNGR"/>
</dbReference>
<proteinExistence type="evidence at transcript level"/>